<proteinExistence type="inferred from homology"/>
<comment type="function">
    <text evidence="1">Involved in allosteric regulation of aspartate carbamoyltransferase.</text>
</comment>
<comment type="cofactor">
    <cofactor evidence="1">
        <name>Zn(2+)</name>
        <dbReference type="ChEBI" id="CHEBI:29105"/>
    </cofactor>
    <text evidence="1">Binds 1 zinc ion per subunit.</text>
</comment>
<comment type="subunit">
    <text evidence="1">Contains catalytic and regulatory chains.</text>
</comment>
<comment type="similarity">
    <text evidence="1">Belongs to the PyrI family.</text>
</comment>
<accession>A7FYJ1</accession>
<gene>
    <name evidence="1" type="primary">pyrI</name>
    <name type="ordered locus">CLB_3277</name>
</gene>
<protein>
    <recommendedName>
        <fullName evidence="1">Aspartate carbamoyltransferase regulatory chain</fullName>
    </recommendedName>
</protein>
<name>PYRI_CLOB1</name>
<reference key="1">
    <citation type="journal article" date="2007" name="PLoS ONE">
        <title>Analysis of the neurotoxin complex genes in Clostridium botulinum A1-A4 and B1 strains: BoNT/A3, /Ba4 and /B1 clusters are located within plasmids.</title>
        <authorList>
            <person name="Smith T.J."/>
            <person name="Hill K.K."/>
            <person name="Foley B.T."/>
            <person name="Detter J.C."/>
            <person name="Munk A.C."/>
            <person name="Bruce D.C."/>
            <person name="Doggett N.A."/>
            <person name="Smith L.A."/>
            <person name="Marks J.D."/>
            <person name="Xie G."/>
            <person name="Brettin T.S."/>
        </authorList>
    </citation>
    <scope>NUCLEOTIDE SEQUENCE [LARGE SCALE GENOMIC DNA]</scope>
    <source>
        <strain>ATCC 19397 / Type A</strain>
    </source>
</reference>
<organism>
    <name type="scientific">Clostridium botulinum (strain ATCC 19397 / Type A)</name>
    <dbReference type="NCBI Taxonomy" id="441770"/>
    <lineage>
        <taxon>Bacteria</taxon>
        <taxon>Bacillati</taxon>
        <taxon>Bacillota</taxon>
        <taxon>Clostridia</taxon>
        <taxon>Eubacteriales</taxon>
        <taxon>Clostridiaceae</taxon>
        <taxon>Clostridium</taxon>
    </lineage>
</organism>
<sequence>MLTINSIKNGIVIDHIQAGHGIKIFKYLGLEEADYRVALIMNAESSKLGKKDIIKIENIMEIDYKVLGFIDPTITIDVIENETIKEKIKLELPKTIENVIKCKNPRCITSIENYIPNEFYLVDEENGEYRCKYCDEIYSGGDINKL</sequence>
<feature type="chain" id="PRO_1000000029" description="Aspartate carbamoyltransferase regulatory chain">
    <location>
        <begin position="1"/>
        <end position="146"/>
    </location>
</feature>
<feature type="binding site" evidence="1">
    <location>
        <position position="102"/>
    </location>
    <ligand>
        <name>Zn(2+)</name>
        <dbReference type="ChEBI" id="CHEBI:29105"/>
    </ligand>
</feature>
<feature type="binding site" evidence="1">
    <location>
        <position position="107"/>
    </location>
    <ligand>
        <name>Zn(2+)</name>
        <dbReference type="ChEBI" id="CHEBI:29105"/>
    </ligand>
</feature>
<feature type="binding site" evidence="1">
    <location>
        <position position="131"/>
    </location>
    <ligand>
        <name>Zn(2+)</name>
        <dbReference type="ChEBI" id="CHEBI:29105"/>
    </ligand>
</feature>
<feature type="binding site" evidence="1">
    <location>
        <position position="134"/>
    </location>
    <ligand>
        <name>Zn(2+)</name>
        <dbReference type="ChEBI" id="CHEBI:29105"/>
    </ligand>
</feature>
<evidence type="ECO:0000255" key="1">
    <source>
        <dbReference type="HAMAP-Rule" id="MF_00002"/>
    </source>
</evidence>
<dbReference type="EMBL" id="CP000726">
    <property type="protein sequence ID" value="ABS34546.1"/>
    <property type="molecule type" value="Genomic_DNA"/>
</dbReference>
<dbReference type="RefSeq" id="WP_003357668.1">
    <property type="nucleotide sequence ID" value="NC_009697.1"/>
</dbReference>
<dbReference type="SMR" id="A7FYJ1"/>
<dbReference type="KEGG" id="cba:CLB_3277"/>
<dbReference type="HOGENOM" id="CLU_128576_0_0_9"/>
<dbReference type="GO" id="GO:0009347">
    <property type="term" value="C:aspartate carbamoyltransferase complex"/>
    <property type="evidence" value="ECO:0007669"/>
    <property type="project" value="InterPro"/>
</dbReference>
<dbReference type="GO" id="GO:0046872">
    <property type="term" value="F:metal ion binding"/>
    <property type="evidence" value="ECO:0007669"/>
    <property type="project" value="UniProtKB-KW"/>
</dbReference>
<dbReference type="GO" id="GO:0006207">
    <property type="term" value="P:'de novo' pyrimidine nucleobase biosynthetic process"/>
    <property type="evidence" value="ECO:0007669"/>
    <property type="project" value="InterPro"/>
</dbReference>
<dbReference type="GO" id="GO:0006221">
    <property type="term" value="P:pyrimidine nucleotide biosynthetic process"/>
    <property type="evidence" value="ECO:0007669"/>
    <property type="project" value="UniProtKB-UniRule"/>
</dbReference>
<dbReference type="Gene3D" id="2.30.30.20">
    <property type="entry name" value="Aspartate carbamoyltransferase regulatory subunit, C-terminal domain"/>
    <property type="match status" value="1"/>
</dbReference>
<dbReference type="Gene3D" id="3.30.70.140">
    <property type="entry name" value="Aspartate carbamoyltransferase regulatory subunit, N-terminal domain"/>
    <property type="match status" value="1"/>
</dbReference>
<dbReference type="HAMAP" id="MF_00002">
    <property type="entry name" value="Asp_carb_tr_reg"/>
    <property type="match status" value="1"/>
</dbReference>
<dbReference type="InterPro" id="IPR020545">
    <property type="entry name" value="Asp_carbamoyltransf_reg_N"/>
</dbReference>
<dbReference type="InterPro" id="IPR002801">
    <property type="entry name" value="Asp_carbamoylTrfase_reg"/>
</dbReference>
<dbReference type="InterPro" id="IPR020542">
    <property type="entry name" value="Asp_carbamoyltrfase_reg_C"/>
</dbReference>
<dbReference type="InterPro" id="IPR036792">
    <property type="entry name" value="Asp_carbatrfase_reg_C_sf"/>
</dbReference>
<dbReference type="InterPro" id="IPR036793">
    <property type="entry name" value="Asp_carbatrfase_reg_N_sf"/>
</dbReference>
<dbReference type="NCBIfam" id="NF002063">
    <property type="entry name" value="PRK00893.1-3"/>
    <property type="match status" value="1"/>
</dbReference>
<dbReference type="PANTHER" id="PTHR35805">
    <property type="entry name" value="ASPARTATE CARBAMOYLTRANSFERASE REGULATORY CHAIN"/>
    <property type="match status" value="1"/>
</dbReference>
<dbReference type="PANTHER" id="PTHR35805:SF1">
    <property type="entry name" value="ASPARTATE CARBAMOYLTRANSFERASE REGULATORY CHAIN"/>
    <property type="match status" value="1"/>
</dbReference>
<dbReference type="Pfam" id="PF01948">
    <property type="entry name" value="PyrI"/>
    <property type="match status" value="1"/>
</dbReference>
<dbReference type="Pfam" id="PF02748">
    <property type="entry name" value="PyrI_C"/>
    <property type="match status" value="1"/>
</dbReference>
<dbReference type="SUPFAM" id="SSF57825">
    <property type="entry name" value="Aspartate carbamoyltransferase, Regulatory-chain, C-terminal domain"/>
    <property type="match status" value="1"/>
</dbReference>
<dbReference type="SUPFAM" id="SSF54893">
    <property type="entry name" value="Aspartate carbamoyltransferase, Regulatory-chain, N-terminal domain"/>
    <property type="match status" value="1"/>
</dbReference>
<keyword id="KW-0479">Metal-binding</keyword>
<keyword id="KW-0665">Pyrimidine biosynthesis</keyword>
<keyword id="KW-0862">Zinc</keyword>